<feature type="chain" id="PRO_0000208330" description="Glutamyl-Q tRNA(Asp) synthetase">
    <location>
        <begin position="1"/>
        <end position="293"/>
    </location>
</feature>
<feature type="short sequence motif" description="'HIGH' region">
    <location>
        <begin position="29"/>
        <end position="39"/>
    </location>
</feature>
<feature type="short sequence motif" description="'KMSKS' region">
    <location>
        <begin position="234"/>
        <end position="238"/>
    </location>
</feature>
<feature type="binding site" evidence="1">
    <location>
        <begin position="26"/>
        <end position="30"/>
    </location>
    <ligand>
        <name>L-glutamate</name>
        <dbReference type="ChEBI" id="CHEBI:29985"/>
    </ligand>
</feature>
<feature type="binding site" evidence="1">
    <location>
        <position position="62"/>
    </location>
    <ligand>
        <name>L-glutamate</name>
        <dbReference type="ChEBI" id="CHEBI:29985"/>
    </ligand>
</feature>
<feature type="binding site" evidence="1">
    <location>
        <position position="118"/>
    </location>
    <ligand>
        <name>Zn(2+)</name>
        <dbReference type="ChEBI" id="CHEBI:29105"/>
    </ligand>
</feature>
<feature type="binding site" evidence="1">
    <location>
        <position position="120"/>
    </location>
    <ligand>
        <name>Zn(2+)</name>
        <dbReference type="ChEBI" id="CHEBI:29105"/>
    </ligand>
</feature>
<feature type="binding site" evidence="1">
    <location>
        <position position="131"/>
    </location>
    <ligand>
        <name>Zn(2+)</name>
        <dbReference type="ChEBI" id="CHEBI:29105"/>
    </ligand>
</feature>
<feature type="binding site" evidence="1">
    <location>
        <position position="135"/>
    </location>
    <ligand>
        <name>Zn(2+)</name>
        <dbReference type="ChEBI" id="CHEBI:29105"/>
    </ligand>
</feature>
<feature type="binding site" evidence="1">
    <location>
        <position position="178"/>
    </location>
    <ligand>
        <name>L-glutamate</name>
        <dbReference type="ChEBI" id="CHEBI:29985"/>
    </ligand>
</feature>
<feature type="binding site" evidence="1">
    <location>
        <position position="196"/>
    </location>
    <ligand>
        <name>L-glutamate</name>
        <dbReference type="ChEBI" id="CHEBI:29985"/>
    </ligand>
</feature>
<feature type="binding site" evidence="1">
    <location>
        <position position="237"/>
    </location>
    <ligand>
        <name>ATP</name>
        <dbReference type="ChEBI" id="CHEBI:30616"/>
    </ligand>
</feature>
<comment type="function">
    <text evidence="1">Catalyzes the tRNA-independent activation of glutamate in presence of ATP and the subsequent transfer of glutamate onto a tRNA(Asp). Glutamate is transferred on the 2-amino-5-(4,5-dihydroxy-2-cyclopenten-1-yl) moiety of the queuosine in the wobble position of the QUC anticodon.</text>
</comment>
<comment type="cofactor">
    <cofactor evidence="1">
        <name>Zn(2+)</name>
        <dbReference type="ChEBI" id="CHEBI:29105"/>
    </cofactor>
    <text evidence="1">Binds 1 zinc ion per subunit.</text>
</comment>
<comment type="similarity">
    <text evidence="1">Belongs to the class-I aminoacyl-tRNA synthetase family. GluQ subfamily.</text>
</comment>
<name>GLUQ_PARMW</name>
<sequence length="293" mass="32388">MPVPDHLLLELERGQRWRADGTYRGRYAPSPTGALHLGNLQTALLSWLQARQAGGVWLLRIDDLDTPRNRPGAVEAIQADLHWLGLDWDGEPILQSCRRGLYASWLSWFRRSGALFPCRCSRRELAGLARYPGTCRDGGAGWGWRDRRLPSWRLRVPSRDPDGSGDVVVRRADGFIAYQLATVIDELALGITDVVRGEDLREALPAQRSVYRALQQQPPRFHHGPLRCDAEGRKLSKREASSGLMALRELGLDAPAVVGLLASGLGYGPPGARLSAIELLEDLTQKGIRAGHS</sequence>
<accession>Q7U8M8</accession>
<protein>
    <recommendedName>
        <fullName evidence="1">Glutamyl-Q tRNA(Asp) synthetase</fullName>
        <shortName evidence="1">Glu-Q-RSs</shortName>
        <ecNumber evidence="1">6.1.1.-</ecNumber>
    </recommendedName>
</protein>
<organism>
    <name type="scientific">Parasynechococcus marenigrum (strain WH8102)</name>
    <dbReference type="NCBI Taxonomy" id="84588"/>
    <lineage>
        <taxon>Bacteria</taxon>
        <taxon>Bacillati</taxon>
        <taxon>Cyanobacteriota</taxon>
        <taxon>Cyanophyceae</taxon>
        <taxon>Synechococcales</taxon>
        <taxon>Prochlorococcaceae</taxon>
        <taxon>Parasynechococcus</taxon>
        <taxon>Parasynechococcus marenigrum</taxon>
    </lineage>
</organism>
<dbReference type="EC" id="6.1.1.-" evidence="1"/>
<dbReference type="EMBL" id="BX569690">
    <property type="protein sequence ID" value="CAE07103.1"/>
    <property type="molecule type" value="Genomic_DNA"/>
</dbReference>
<dbReference type="RefSeq" id="WP_011127455.1">
    <property type="nucleotide sequence ID" value="NC_005070.1"/>
</dbReference>
<dbReference type="SMR" id="Q7U8M8"/>
<dbReference type="STRING" id="84588.SYNW0588"/>
<dbReference type="KEGG" id="syw:SYNW0588"/>
<dbReference type="eggNOG" id="COG0008">
    <property type="taxonomic scope" value="Bacteria"/>
</dbReference>
<dbReference type="HOGENOM" id="CLU_015768_0_0_3"/>
<dbReference type="Proteomes" id="UP000001422">
    <property type="component" value="Chromosome"/>
</dbReference>
<dbReference type="GO" id="GO:0005829">
    <property type="term" value="C:cytosol"/>
    <property type="evidence" value="ECO:0007669"/>
    <property type="project" value="TreeGrafter"/>
</dbReference>
<dbReference type="GO" id="GO:0005524">
    <property type="term" value="F:ATP binding"/>
    <property type="evidence" value="ECO:0007669"/>
    <property type="project" value="UniProtKB-KW"/>
</dbReference>
<dbReference type="GO" id="GO:0004818">
    <property type="term" value="F:glutamate-tRNA ligase activity"/>
    <property type="evidence" value="ECO:0007669"/>
    <property type="project" value="TreeGrafter"/>
</dbReference>
<dbReference type="GO" id="GO:0008270">
    <property type="term" value="F:zinc ion binding"/>
    <property type="evidence" value="ECO:0007669"/>
    <property type="project" value="UniProtKB-UniRule"/>
</dbReference>
<dbReference type="GO" id="GO:0006424">
    <property type="term" value="P:glutamyl-tRNA aminoacylation"/>
    <property type="evidence" value="ECO:0007669"/>
    <property type="project" value="InterPro"/>
</dbReference>
<dbReference type="GO" id="GO:0006400">
    <property type="term" value="P:tRNA modification"/>
    <property type="evidence" value="ECO:0007669"/>
    <property type="project" value="InterPro"/>
</dbReference>
<dbReference type="Gene3D" id="3.40.50.620">
    <property type="entry name" value="HUPs"/>
    <property type="match status" value="1"/>
</dbReference>
<dbReference type="HAMAP" id="MF_01428">
    <property type="entry name" value="Glu_Q_tRNA_synth"/>
    <property type="match status" value="1"/>
</dbReference>
<dbReference type="InterPro" id="IPR001412">
    <property type="entry name" value="aa-tRNA-synth_I_CS"/>
</dbReference>
<dbReference type="InterPro" id="IPR022380">
    <property type="entry name" value="Glu-Q_tRNA(Asp)_Synthase"/>
</dbReference>
<dbReference type="InterPro" id="IPR000924">
    <property type="entry name" value="Glu/Gln-tRNA-synth"/>
</dbReference>
<dbReference type="InterPro" id="IPR020058">
    <property type="entry name" value="Glu/Gln-tRNA-synth_Ib_cat-dom"/>
</dbReference>
<dbReference type="InterPro" id="IPR049940">
    <property type="entry name" value="GluQ/Sye"/>
</dbReference>
<dbReference type="InterPro" id="IPR014729">
    <property type="entry name" value="Rossmann-like_a/b/a_fold"/>
</dbReference>
<dbReference type="NCBIfam" id="NF004314">
    <property type="entry name" value="PRK05710.1-3"/>
    <property type="match status" value="1"/>
</dbReference>
<dbReference type="PANTHER" id="PTHR43311">
    <property type="entry name" value="GLUTAMATE--TRNA LIGASE"/>
    <property type="match status" value="1"/>
</dbReference>
<dbReference type="PANTHER" id="PTHR43311:SF1">
    <property type="entry name" value="GLUTAMYL-Q TRNA(ASP) SYNTHETASE"/>
    <property type="match status" value="1"/>
</dbReference>
<dbReference type="Pfam" id="PF00749">
    <property type="entry name" value="tRNA-synt_1c"/>
    <property type="match status" value="2"/>
</dbReference>
<dbReference type="PRINTS" id="PR00987">
    <property type="entry name" value="TRNASYNTHGLU"/>
</dbReference>
<dbReference type="SUPFAM" id="SSF52374">
    <property type="entry name" value="Nucleotidylyl transferase"/>
    <property type="match status" value="1"/>
</dbReference>
<dbReference type="PROSITE" id="PS00178">
    <property type="entry name" value="AA_TRNA_LIGASE_I"/>
    <property type="match status" value="1"/>
</dbReference>
<gene>
    <name evidence="1" type="primary">gluQ</name>
    <name type="ordered locus">SYNW0588</name>
</gene>
<reference key="1">
    <citation type="journal article" date="2003" name="Nature">
        <title>The genome of a motile marine Synechococcus.</title>
        <authorList>
            <person name="Palenik B."/>
            <person name="Brahamsha B."/>
            <person name="Larimer F.W."/>
            <person name="Land M.L."/>
            <person name="Hauser L."/>
            <person name="Chain P."/>
            <person name="Lamerdin J.E."/>
            <person name="Regala W."/>
            <person name="Allen E.E."/>
            <person name="McCarren J."/>
            <person name="Paulsen I.T."/>
            <person name="Dufresne A."/>
            <person name="Partensky F."/>
            <person name="Webb E.A."/>
            <person name="Waterbury J."/>
        </authorList>
    </citation>
    <scope>NUCLEOTIDE SEQUENCE [LARGE SCALE GENOMIC DNA]</scope>
    <source>
        <strain>WH8102</strain>
    </source>
</reference>
<keyword id="KW-0030">Aminoacyl-tRNA synthetase</keyword>
<keyword id="KW-0067">ATP-binding</keyword>
<keyword id="KW-0436">Ligase</keyword>
<keyword id="KW-0479">Metal-binding</keyword>
<keyword id="KW-0547">Nucleotide-binding</keyword>
<keyword id="KW-0862">Zinc</keyword>
<proteinExistence type="inferred from homology"/>
<evidence type="ECO:0000255" key="1">
    <source>
        <dbReference type="HAMAP-Rule" id="MF_01428"/>
    </source>
</evidence>